<organism>
    <name type="scientific">Arabidopsis thaliana</name>
    <name type="common">Mouse-ear cress</name>
    <dbReference type="NCBI Taxonomy" id="3702"/>
    <lineage>
        <taxon>Eukaryota</taxon>
        <taxon>Viridiplantae</taxon>
        <taxon>Streptophyta</taxon>
        <taxon>Embryophyta</taxon>
        <taxon>Tracheophyta</taxon>
        <taxon>Spermatophyta</taxon>
        <taxon>Magnoliopsida</taxon>
        <taxon>eudicotyledons</taxon>
        <taxon>Gunneridae</taxon>
        <taxon>Pentapetalae</taxon>
        <taxon>rosids</taxon>
        <taxon>malvids</taxon>
        <taxon>Brassicales</taxon>
        <taxon>Brassicaceae</taxon>
        <taxon>Camelineae</taxon>
        <taxon>Arabidopsis</taxon>
    </lineage>
</organism>
<gene>
    <name type="primary">GATL2</name>
    <name type="ordered locus">At3g50760</name>
    <name type="ORF">F18B3.40</name>
    <name type="ORF">T3A5.140</name>
</gene>
<evidence type="ECO:0000250" key="1"/>
<evidence type="ECO:0000255" key="2"/>
<evidence type="ECO:0000305" key="3"/>
<accession>Q9S7G2</accession>
<keyword id="KW-0961">Cell wall biogenesis/degradation</keyword>
<keyword id="KW-0325">Glycoprotein</keyword>
<keyword id="KW-0328">Glycosyltransferase</keyword>
<keyword id="KW-0333">Golgi apparatus</keyword>
<keyword id="KW-0472">Membrane</keyword>
<keyword id="KW-1185">Reference proteome</keyword>
<keyword id="KW-0735">Signal-anchor</keyword>
<keyword id="KW-0808">Transferase</keyword>
<keyword id="KW-0812">Transmembrane</keyword>
<keyword id="KW-1133">Transmembrane helix</keyword>
<name>GATL2_ARATH</name>
<reference key="1">
    <citation type="journal article" date="2000" name="Nature">
        <title>Sequence and analysis of chromosome 3 of the plant Arabidopsis thaliana.</title>
        <authorList>
            <person name="Salanoubat M."/>
            <person name="Lemcke K."/>
            <person name="Rieger M."/>
            <person name="Ansorge W."/>
            <person name="Unseld M."/>
            <person name="Fartmann B."/>
            <person name="Valle G."/>
            <person name="Bloecker H."/>
            <person name="Perez-Alonso M."/>
            <person name="Obermaier B."/>
            <person name="Delseny M."/>
            <person name="Boutry M."/>
            <person name="Grivell L.A."/>
            <person name="Mache R."/>
            <person name="Puigdomenech P."/>
            <person name="De Simone V."/>
            <person name="Choisne N."/>
            <person name="Artiguenave F."/>
            <person name="Robert C."/>
            <person name="Brottier P."/>
            <person name="Wincker P."/>
            <person name="Cattolico L."/>
            <person name="Weissenbach J."/>
            <person name="Saurin W."/>
            <person name="Quetier F."/>
            <person name="Schaefer M."/>
            <person name="Mueller-Auer S."/>
            <person name="Gabel C."/>
            <person name="Fuchs M."/>
            <person name="Benes V."/>
            <person name="Wurmbach E."/>
            <person name="Drzonek H."/>
            <person name="Erfle H."/>
            <person name="Jordan N."/>
            <person name="Bangert S."/>
            <person name="Wiedelmann R."/>
            <person name="Kranz H."/>
            <person name="Voss H."/>
            <person name="Holland R."/>
            <person name="Brandt P."/>
            <person name="Nyakatura G."/>
            <person name="Vezzi A."/>
            <person name="D'Angelo M."/>
            <person name="Pallavicini A."/>
            <person name="Toppo S."/>
            <person name="Simionati B."/>
            <person name="Conrad A."/>
            <person name="Hornischer K."/>
            <person name="Kauer G."/>
            <person name="Loehnert T.-H."/>
            <person name="Nordsiek G."/>
            <person name="Reichelt J."/>
            <person name="Scharfe M."/>
            <person name="Schoen O."/>
            <person name="Bargues M."/>
            <person name="Terol J."/>
            <person name="Climent J."/>
            <person name="Navarro P."/>
            <person name="Collado C."/>
            <person name="Perez-Perez A."/>
            <person name="Ottenwaelder B."/>
            <person name="Duchemin D."/>
            <person name="Cooke R."/>
            <person name="Laudie M."/>
            <person name="Berger-Llauro C."/>
            <person name="Purnelle B."/>
            <person name="Masuy D."/>
            <person name="de Haan M."/>
            <person name="Maarse A.C."/>
            <person name="Alcaraz J.-P."/>
            <person name="Cottet A."/>
            <person name="Casacuberta E."/>
            <person name="Monfort A."/>
            <person name="Argiriou A."/>
            <person name="Flores M."/>
            <person name="Liguori R."/>
            <person name="Vitale D."/>
            <person name="Mannhaupt G."/>
            <person name="Haase D."/>
            <person name="Schoof H."/>
            <person name="Rudd S."/>
            <person name="Zaccaria P."/>
            <person name="Mewes H.-W."/>
            <person name="Mayer K.F.X."/>
            <person name="Kaul S."/>
            <person name="Town C.D."/>
            <person name="Koo H.L."/>
            <person name="Tallon L.J."/>
            <person name="Jenkins J."/>
            <person name="Rooney T."/>
            <person name="Rizzo M."/>
            <person name="Walts A."/>
            <person name="Utterback T."/>
            <person name="Fujii C.Y."/>
            <person name="Shea T.P."/>
            <person name="Creasy T.H."/>
            <person name="Haas B."/>
            <person name="Maiti R."/>
            <person name="Wu D."/>
            <person name="Peterson J."/>
            <person name="Van Aken S."/>
            <person name="Pai G."/>
            <person name="Militscher J."/>
            <person name="Sellers P."/>
            <person name="Gill J.E."/>
            <person name="Feldblyum T.V."/>
            <person name="Preuss D."/>
            <person name="Lin X."/>
            <person name="Nierman W.C."/>
            <person name="Salzberg S.L."/>
            <person name="White O."/>
            <person name="Venter J.C."/>
            <person name="Fraser C.M."/>
            <person name="Kaneko T."/>
            <person name="Nakamura Y."/>
            <person name="Sato S."/>
            <person name="Kato T."/>
            <person name="Asamizu E."/>
            <person name="Sasamoto S."/>
            <person name="Kimura T."/>
            <person name="Idesawa K."/>
            <person name="Kawashima K."/>
            <person name="Kishida Y."/>
            <person name="Kiyokawa C."/>
            <person name="Kohara M."/>
            <person name="Matsumoto M."/>
            <person name="Matsuno A."/>
            <person name="Muraki A."/>
            <person name="Nakayama S."/>
            <person name="Nakazaki N."/>
            <person name="Shinpo S."/>
            <person name="Takeuchi C."/>
            <person name="Wada T."/>
            <person name="Watanabe A."/>
            <person name="Yamada M."/>
            <person name="Yasuda M."/>
            <person name="Tabata S."/>
        </authorList>
    </citation>
    <scope>NUCLEOTIDE SEQUENCE [LARGE SCALE GENOMIC DNA]</scope>
    <source>
        <strain>cv. Columbia</strain>
    </source>
</reference>
<reference key="2">
    <citation type="journal article" date="2017" name="Plant J.">
        <title>Araport11: a complete reannotation of the Arabidopsis thaliana reference genome.</title>
        <authorList>
            <person name="Cheng C.Y."/>
            <person name="Krishnakumar V."/>
            <person name="Chan A.P."/>
            <person name="Thibaud-Nissen F."/>
            <person name="Schobel S."/>
            <person name="Town C.D."/>
        </authorList>
    </citation>
    <scope>GENOME REANNOTATION</scope>
    <source>
        <strain>cv. Columbia</strain>
    </source>
</reference>
<reference key="3">
    <citation type="submission" date="2004-03" db="EMBL/GenBank/DDBJ databases">
        <title>Arabidopsis ORF clones.</title>
        <authorList>
            <person name="Cheuk R."/>
            <person name="Chen H."/>
            <person name="Kim C.J."/>
            <person name="Shinn P."/>
            <person name="Carninci P."/>
            <person name="Hayashizaki Y."/>
            <person name="Ishida J."/>
            <person name="Kamiya A."/>
            <person name="Kawai J."/>
            <person name="Narusaka M."/>
            <person name="Sakurai T."/>
            <person name="Satou M."/>
            <person name="Seki M."/>
            <person name="Shinozaki K."/>
            <person name="Ecker J.R."/>
        </authorList>
    </citation>
    <scope>NUCLEOTIDE SEQUENCE [LARGE SCALE MRNA]</scope>
</reference>
<reference key="4">
    <citation type="submission" date="2005-03" db="EMBL/GenBank/DDBJ databases">
        <title>Large-scale analysis of RIKEN Arabidopsis full-length (RAFL) cDNAs.</title>
        <authorList>
            <person name="Totoki Y."/>
            <person name="Seki M."/>
            <person name="Ishida J."/>
            <person name="Nakajima M."/>
            <person name="Enju A."/>
            <person name="Kamiya A."/>
            <person name="Narusaka M."/>
            <person name="Shin-i T."/>
            <person name="Nakagawa M."/>
            <person name="Sakamoto N."/>
            <person name="Oishi K."/>
            <person name="Kohara Y."/>
            <person name="Kobayashi M."/>
            <person name="Toyoda A."/>
            <person name="Sakaki Y."/>
            <person name="Sakurai T."/>
            <person name="Iida K."/>
            <person name="Akiyama K."/>
            <person name="Satou M."/>
            <person name="Toyoda T."/>
            <person name="Konagaya A."/>
            <person name="Carninci P."/>
            <person name="Kawai J."/>
            <person name="Hayashizaki Y."/>
            <person name="Shinozaki K."/>
        </authorList>
    </citation>
    <scope>NUCLEOTIDE SEQUENCE [LARGE SCALE MRNA]</scope>
    <source>
        <strain>cv. Columbia</strain>
    </source>
</reference>
<reference key="5">
    <citation type="journal article" date="2006" name="Proc. Natl. Acad. Sci. U.S.A.">
        <title>Functional identification of an Arabidopsis pectin biosynthetic homogalacturonan galacturonosyltransferase.</title>
        <authorList>
            <person name="Sterling J.D."/>
            <person name="Atmodjo M.A."/>
            <person name="Inwood S.E."/>
            <person name="Kumar Kolli V.S."/>
            <person name="Quigley H.F."/>
            <person name="Hahn M.G."/>
            <person name="Mohnen D."/>
        </authorList>
    </citation>
    <scope>GENE FAMILY</scope>
    <scope>NOMENCLATURE</scope>
</reference>
<comment type="function">
    <text evidence="1">May be involved in pectin and/or xylans biosynthesis in cell walls.</text>
</comment>
<comment type="pathway">
    <text>Glycan metabolism; pectin biosynthesis.</text>
</comment>
<comment type="subcellular location">
    <subcellularLocation>
        <location evidence="1">Golgi apparatus membrane</location>
        <topology evidence="1">Single-pass type II membrane protein</topology>
    </subcellularLocation>
</comment>
<comment type="similarity">
    <text evidence="3">Belongs to the glycosyltransferase 8 family.</text>
</comment>
<proteinExistence type="evidence at transcript level"/>
<feature type="chain" id="PRO_0000392604" description="Probable galacturonosyltransferase-like 2">
    <location>
        <begin position="1"/>
        <end position="341"/>
    </location>
</feature>
<feature type="topological domain" description="Cytoplasmic" evidence="2">
    <location>
        <begin position="1"/>
        <end position="4"/>
    </location>
</feature>
<feature type="transmembrane region" description="Helical; Signal-anchor for type II membrane protein" evidence="2">
    <location>
        <begin position="5"/>
        <end position="22"/>
    </location>
</feature>
<feature type="topological domain" description="Lumenal" evidence="2">
    <location>
        <begin position="23"/>
        <end position="341"/>
    </location>
</feature>
<feature type="glycosylation site" description="N-linked (GlcNAc...) asparagine" evidence="2">
    <location>
        <position position="190"/>
    </location>
</feature>
<protein>
    <recommendedName>
        <fullName>Probable galacturonosyltransferase-like 2</fullName>
        <ecNumber>2.4.1.-</ecNumber>
    </recommendedName>
</protein>
<dbReference type="EC" id="2.4.1.-"/>
<dbReference type="EMBL" id="AL049862">
    <property type="protein sequence ID" value="CAB42905.1"/>
    <property type="molecule type" value="Genomic_DNA"/>
</dbReference>
<dbReference type="EMBL" id="AL132979">
    <property type="protein sequence ID" value="CAB62445.1"/>
    <property type="molecule type" value="Genomic_DNA"/>
</dbReference>
<dbReference type="EMBL" id="CP002686">
    <property type="protein sequence ID" value="AEE78706.1"/>
    <property type="molecule type" value="Genomic_DNA"/>
</dbReference>
<dbReference type="EMBL" id="BT011742">
    <property type="protein sequence ID" value="AAS49105.1"/>
    <property type="molecule type" value="mRNA"/>
</dbReference>
<dbReference type="EMBL" id="AK221498">
    <property type="protein sequence ID" value="BAD94712.1"/>
    <property type="molecule type" value="mRNA"/>
</dbReference>
<dbReference type="PIR" id="T46153">
    <property type="entry name" value="T46153"/>
</dbReference>
<dbReference type="RefSeq" id="NP_190645.3">
    <property type="nucleotide sequence ID" value="NM_114936.5"/>
</dbReference>
<dbReference type="SMR" id="Q9S7G2"/>
<dbReference type="BioGRID" id="9558">
    <property type="interactions" value="1"/>
</dbReference>
<dbReference type="FunCoup" id="Q9S7G2">
    <property type="interactions" value="548"/>
</dbReference>
<dbReference type="IntAct" id="Q9S7G2">
    <property type="interactions" value="1"/>
</dbReference>
<dbReference type="STRING" id="3702.Q9S7G2"/>
<dbReference type="CAZy" id="GT8">
    <property type="family name" value="Glycosyltransferase Family 8"/>
</dbReference>
<dbReference type="GlyCosmos" id="Q9S7G2">
    <property type="glycosylation" value="1 site, No reported glycans"/>
</dbReference>
<dbReference type="GlyGen" id="Q9S7G2">
    <property type="glycosylation" value="1 site"/>
</dbReference>
<dbReference type="PaxDb" id="3702-AT3G50760.1"/>
<dbReference type="ProteomicsDB" id="248614"/>
<dbReference type="EnsemblPlants" id="AT3G50760.1">
    <property type="protein sequence ID" value="AT3G50760.1"/>
    <property type="gene ID" value="AT3G50760"/>
</dbReference>
<dbReference type="GeneID" id="824240"/>
<dbReference type="Gramene" id="AT3G50760.1">
    <property type="protein sequence ID" value="AT3G50760.1"/>
    <property type="gene ID" value="AT3G50760"/>
</dbReference>
<dbReference type="KEGG" id="ath:AT3G50760"/>
<dbReference type="Araport" id="AT3G50760"/>
<dbReference type="TAIR" id="AT3G50760">
    <property type="gene designation" value="GATL2"/>
</dbReference>
<dbReference type="eggNOG" id="ENOG502QTN8">
    <property type="taxonomic scope" value="Eukaryota"/>
</dbReference>
<dbReference type="HOGENOM" id="CLU_034713_0_0_1"/>
<dbReference type="InParanoid" id="Q9S7G2"/>
<dbReference type="OMA" id="CSQEAVH"/>
<dbReference type="PhylomeDB" id="Q9S7G2"/>
<dbReference type="UniPathway" id="UPA00845"/>
<dbReference type="PRO" id="PR:Q9S7G2"/>
<dbReference type="Proteomes" id="UP000006548">
    <property type="component" value="Chromosome 3"/>
</dbReference>
<dbReference type="ExpressionAtlas" id="Q9S7G2">
    <property type="expression patterns" value="baseline and differential"/>
</dbReference>
<dbReference type="GO" id="GO:0005794">
    <property type="term" value="C:Golgi apparatus"/>
    <property type="evidence" value="ECO:0000314"/>
    <property type="project" value="TAIR"/>
</dbReference>
<dbReference type="GO" id="GO:0000139">
    <property type="term" value="C:Golgi membrane"/>
    <property type="evidence" value="ECO:0007669"/>
    <property type="project" value="UniProtKB-SubCell"/>
</dbReference>
<dbReference type="GO" id="GO:0047262">
    <property type="term" value="F:polygalacturonate 4-alpha-galacturonosyltransferase activity"/>
    <property type="evidence" value="ECO:0000250"/>
    <property type="project" value="TAIR"/>
</dbReference>
<dbReference type="GO" id="GO:0071555">
    <property type="term" value="P:cell wall organization"/>
    <property type="evidence" value="ECO:0007669"/>
    <property type="project" value="UniProtKB-KW"/>
</dbReference>
<dbReference type="GO" id="GO:0045489">
    <property type="term" value="P:pectin biosynthetic process"/>
    <property type="evidence" value="ECO:0007669"/>
    <property type="project" value="UniProtKB-UniPathway"/>
</dbReference>
<dbReference type="FunFam" id="3.90.550.10:FF:000024">
    <property type="entry name" value="Hexosyltransferase"/>
    <property type="match status" value="1"/>
</dbReference>
<dbReference type="Gene3D" id="3.90.550.10">
    <property type="entry name" value="Spore Coat Polysaccharide Biosynthesis Protein SpsA, Chain A"/>
    <property type="match status" value="1"/>
</dbReference>
<dbReference type="InterPro" id="IPR002495">
    <property type="entry name" value="Glyco_trans_8"/>
</dbReference>
<dbReference type="InterPro" id="IPR050748">
    <property type="entry name" value="Glycosyltrans_8_dom-fam"/>
</dbReference>
<dbReference type="InterPro" id="IPR029044">
    <property type="entry name" value="Nucleotide-diphossugar_trans"/>
</dbReference>
<dbReference type="PANTHER" id="PTHR13778:SF72">
    <property type="entry name" value="GALACTURONOSYLTRANSFERASE-LIKE 2-RELATED"/>
    <property type="match status" value="1"/>
</dbReference>
<dbReference type="PANTHER" id="PTHR13778">
    <property type="entry name" value="GLYCOSYLTRANSFERASE 8 DOMAIN-CONTAINING PROTEIN"/>
    <property type="match status" value="1"/>
</dbReference>
<dbReference type="Pfam" id="PF01501">
    <property type="entry name" value="Glyco_transf_8"/>
    <property type="match status" value="1"/>
</dbReference>
<dbReference type="SUPFAM" id="SSF53448">
    <property type="entry name" value="Nucleotide-diphospho-sugar transferases"/>
    <property type="match status" value="1"/>
</dbReference>
<sequence length="341" mass="38775">MHSKFILYLSILAVFTVSFAGGERFKEAPKFFNSPECLTIENDEDFVCSDKAIHVAMTLDTAYLRGSMAVILSVLQHSSCPQNIVFHFVTSKQSHRLQNYVVASFPYLKFRIYPYDVAAISGLISTSIRSALDSPLNYARNYLADILPTCLSRVVYLDSDLILVDDISKLFSTHIPTDVVLAAPEYCNANFTTYFTPTFWSNPSLSITLSLNRRATPCYFNTGVMVIELKKWREGDYTRKIIEWMELQKRIRIYELGSLPPFLLVFAGNIAPVDHRWNQHGLGGDNFRGLCRDLHPGPVSLLHWSGKGKPWVRLDDGRPCPLDALWVPYDLLESRFDLIES</sequence>